<accession>B7KH60</accession>
<reference key="1">
    <citation type="journal article" date="2011" name="MBio">
        <title>Novel metabolic attributes of the genus Cyanothece, comprising a group of unicellular nitrogen-fixing Cyanobacteria.</title>
        <authorList>
            <person name="Bandyopadhyay A."/>
            <person name="Elvitigala T."/>
            <person name="Welsh E."/>
            <person name="Stockel J."/>
            <person name="Liberton M."/>
            <person name="Min H."/>
            <person name="Sherman L.A."/>
            <person name="Pakrasi H.B."/>
        </authorList>
    </citation>
    <scope>NUCLEOTIDE SEQUENCE [LARGE SCALE GENOMIC DNA]</scope>
    <source>
        <strain>PCC 7424</strain>
    </source>
</reference>
<organism>
    <name type="scientific">Gloeothece citriformis (strain PCC 7424)</name>
    <name type="common">Cyanothece sp. (strain PCC 7424)</name>
    <dbReference type="NCBI Taxonomy" id="65393"/>
    <lineage>
        <taxon>Bacteria</taxon>
        <taxon>Bacillati</taxon>
        <taxon>Cyanobacteriota</taxon>
        <taxon>Cyanophyceae</taxon>
        <taxon>Oscillatoriophycideae</taxon>
        <taxon>Chroococcales</taxon>
        <taxon>Aphanothecaceae</taxon>
        <taxon>Gloeothece</taxon>
        <taxon>Gloeothece citriformis</taxon>
    </lineage>
</organism>
<feature type="chain" id="PRO_1000141341" description="Photosystem II reaction center protein L">
    <location>
        <begin position="1"/>
        <end position="39"/>
    </location>
</feature>
<feature type="transmembrane region" description="Helical" evidence="1">
    <location>
        <begin position="18"/>
        <end position="38"/>
    </location>
</feature>
<sequence length="39" mass="4501">MERNTNPNRQPVELNRTSLYLGLLLVAVLGILFSSYFFN</sequence>
<name>PSBL_GLOC7</name>
<evidence type="ECO:0000255" key="1">
    <source>
        <dbReference type="HAMAP-Rule" id="MF_01317"/>
    </source>
</evidence>
<comment type="function">
    <text evidence="1">One of the components of the core complex of photosystem II (PSII). PSII is a light-driven water:plastoquinone oxidoreductase that uses light energy to abstract electrons from H(2)O, generating O(2) and a proton gradient subsequently used for ATP formation. It consists of a core antenna complex that captures photons, and an electron transfer chain that converts photonic excitation into a charge separation. This subunit is found at the monomer-monomer interface and is required for correct PSII assembly and/or dimerization.</text>
</comment>
<comment type="subunit">
    <text evidence="1">PSII is composed of 1 copy each of membrane proteins PsbA, PsbB, PsbC, PsbD, PsbE, PsbF, PsbH, PsbI, PsbJ, PsbK, PsbL, PsbM, PsbT, PsbX, PsbY, PsbZ, Psb30/Ycf12, peripheral proteins PsbO, CyanoQ (PsbQ), PsbU, PsbV and a large number of cofactors. It forms dimeric complexes.</text>
</comment>
<comment type="subcellular location">
    <subcellularLocation>
        <location evidence="1">Cellular thylakoid membrane</location>
        <topology evidence="1">Single-pass membrane protein</topology>
    </subcellularLocation>
</comment>
<comment type="similarity">
    <text evidence="1">Belongs to the PsbL family.</text>
</comment>
<keyword id="KW-0472">Membrane</keyword>
<keyword id="KW-0602">Photosynthesis</keyword>
<keyword id="KW-0604">Photosystem II</keyword>
<keyword id="KW-0674">Reaction center</keyword>
<keyword id="KW-1185">Reference proteome</keyword>
<keyword id="KW-0793">Thylakoid</keyword>
<keyword id="KW-0812">Transmembrane</keyword>
<keyword id="KW-1133">Transmembrane helix</keyword>
<protein>
    <recommendedName>
        <fullName evidence="1">Photosystem II reaction center protein L</fullName>
        <shortName evidence="1">PSII-L</shortName>
    </recommendedName>
</protein>
<proteinExistence type="inferred from homology"/>
<dbReference type="EMBL" id="CP001291">
    <property type="protein sequence ID" value="ACK69269.1"/>
    <property type="molecule type" value="Genomic_DNA"/>
</dbReference>
<dbReference type="RefSeq" id="WP_012598216.1">
    <property type="nucleotide sequence ID" value="NC_011729.1"/>
</dbReference>
<dbReference type="SMR" id="B7KH60"/>
<dbReference type="STRING" id="65393.PCC7424_0813"/>
<dbReference type="KEGG" id="cyc:PCC7424_0813"/>
<dbReference type="eggNOG" id="ENOG5033AKP">
    <property type="taxonomic scope" value="Bacteria"/>
</dbReference>
<dbReference type="HOGENOM" id="CLU_214425_0_0_3"/>
<dbReference type="Proteomes" id="UP000002384">
    <property type="component" value="Chromosome"/>
</dbReference>
<dbReference type="GO" id="GO:0009539">
    <property type="term" value="C:photosystem II reaction center"/>
    <property type="evidence" value="ECO:0007669"/>
    <property type="project" value="InterPro"/>
</dbReference>
<dbReference type="GO" id="GO:0031676">
    <property type="term" value="C:plasma membrane-derived thylakoid membrane"/>
    <property type="evidence" value="ECO:0007669"/>
    <property type="project" value="UniProtKB-SubCell"/>
</dbReference>
<dbReference type="GO" id="GO:0015979">
    <property type="term" value="P:photosynthesis"/>
    <property type="evidence" value="ECO:0007669"/>
    <property type="project" value="UniProtKB-UniRule"/>
</dbReference>
<dbReference type="HAMAP" id="MF_01317">
    <property type="entry name" value="PSII_PsbL"/>
    <property type="match status" value="1"/>
</dbReference>
<dbReference type="InterPro" id="IPR003372">
    <property type="entry name" value="PSII_PsbL"/>
</dbReference>
<dbReference type="InterPro" id="IPR037266">
    <property type="entry name" value="PSII_PsbL_sf"/>
</dbReference>
<dbReference type="NCBIfam" id="NF001972">
    <property type="entry name" value="PRK00753.1"/>
    <property type="match status" value="1"/>
</dbReference>
<dbReference type="Pfam" id="PF02419">
    <property type="entry name" value="PsbL"/>
    <property type="match status" value="1"/>
</dbReference>
<dbReference type="SUPFAM" id="SSF161017">
    <property type="entry name" value="Photosystem II reaction center protein L, PsbL"/>
    <property type="match status" value="1"/>
</dbReference>
<gene>
    <name evidence="1" type="primary">psbL</name>
    <name type="ordered locus">PCC7424_0813</name>
</gene>